<keyword id="KW-1015">Disulfide bond</keyword>
<keyword id="KW-0272">Extracellular matrix</keyword>
<keyword id="KW-0325">Glycoprotein</keyword>
<keyword id="KW-1185">Reference proteome</keyword>
<keyword id="KW-0964">Secreted</keyword>
<keyword id="KW-0732">Signal</keyword>
<evidence type="ECO:0000250" key="1"/>
<evidence type="ECO:0000255" key="2"/>
<evidence type="ECO:0000255" key="3">
    <source>
        <dbReference type="PROSITE-ProRule" id="PRU00210"/>
    </source>
</evidence>
<evidence type="ECO:0000255" key="4">
    <source>
        <dbReference type="PROSITE-ProRule" id="PRU00350"/>
    </source>
</evidence>
<evidence type="ECO:0000305" key="5"/>
<reference key="1">
    <citation type="journal article" date="2005" name="Science">
        <title>The transcriptional landscape of the mammalian genome.</title>
        <authorList>
            <person name="Carninci P."/>
            <person name="Kasukawa T."/>
            <person name="Katayama S."/>
            <person name="Gough J."/>
            <person name="Frith M.C."/>
            <person name="Maeda N."/>
            <person name="Oyama R."/>
            <person name="Ravasi T."/>
            <person name="Lenhard B."/>
            <person name="Wells C."/>
            <person name="Kodzius R."/>
            <person name="Shimokawa K."/>
            <person name="Bajic V.B."/>
            <person name="Brenner S.E."/>
            <person name="Batalov S."/>
            <person name="Forrest A.R."/>
            <person name="Zavolan M."/>
            <person name="Davis M.J."/>
            <person name="Wilming L.G."/>
            <person name="Aidinis V."/>
            <person name="Allen J.E."/>
            <person name="Ambesi-Impiombato A."/>
            <person name="Apweiler R."/>
            <person name="Aturaliya R.N."/>
            <person name="Bailey T.L."/>
            <person name="Bansal M."/>
            <person name="Baxter L."/>
            <person name="Beisel K.W."/>
            <person name="Bersano T."/>
            <person name="Bono H."/>
            <person name="Chalk A.M."/>
            <person name="Chiu K.P."/>
            <person name="Choudhary V."/>
            <person name="Christoffels A."/>
            <person name="Clutterbuck D.R."/>
            <person name="Crowe M.L."/>
            <person name="Dalla E."/>
            <person name="Dalrymple B.P."/>
            <person name="de Bono B."/>
            <person name="Della Gatta G."/>
            <person name="di Bernardo D."/>
            <person name="Down T."/>
            <person name="Engstrom P."/>
            <person name="Fagiolini M."/>
            <person name="Faulkner G."/>
            <person name="Fletcher C.F."/>
            <person name="Fukushima T."/>
            <person name="Furuno M."/>
            <person name="Futaki S."/>
            <person name="Gariboldi M."/>
            <person name="Georgii-Hemming P."/>
            <person name="Gingeras T.R."/>
            <person name="Gojobori T."/>
            <person name="Green R.E."/>
            <person name="Gustincich S."/>
            <person name="Harbers M."/>
            <person name="Hayashi Y."/>
            <person name="Hensch T.K."/>
            <person name="Hirokawa N."/>
            <person name="Hill D."/>
            <person name="Huminiecki L."/>
            <person name="Iacono M."/>
            <person name="Ikeo K."/>
            <person name="Iwama A."/>
            <person name="Ishikawa T."/>
            <person name="Jakt M."/>
            <person name="Kanapin A."/>
            <person name="Katoh M."/>
            <person name="Kawasawa Y."/>
            <person name="Kelso J."/>
            <person name="Kitamura H."/>
            <person name="Kitano H."/>
            <person name="Kollias G."/>
            <person name="Krishnan S.P."/>
            <person name="Kruger A."/>
            <person name="Kummerfeld S.K."/>
            <person name="Kurochkin I.V."/>
            <person name="Lareau L.F."/>
            <person name="Lazarevic D."/>
            <person name="Lipovich L."/>
            <person name="Liu J."/>
            <person name="Liuni S."/>
            <person name="McWilliam S."/>
            <person name="Madan Babu M."/>
            <person name="Madera M."/>
            <person name="Marchionni L."/>
            <person name="Matsuda H."/>
            <person name="Matsuzawa S."/>
            <person name="Miki H."/>
            <person name="Mignone F."/>
            <person name="Miyake S."/>
            <person name="Morris K."/>
            <person name="Mottagui-Tabar S."/>
            <person name="Mulder N."/>
            <person name="Nakano N."/>
            <person name="Nakauchi H."/>
            <person name="Ng P."/>
            <person name="Nilsson R."/>
            <person name="Nishiguchi S."/>
            <person name="Nishikawa S."/>
            <person name="Nori F."/>
            <person name="Ohara O."/>
            <person name="Okazaki Y."/>
            <person name="Orlando V."/>
            <person name="Pang K.C."/>
            <person name="Pavan W.J."/>
            <person name="Pavesi G."/>
            <person name="Pesole G."/>
            <person name="Petrovsky N."/>
            <person name="Piazza S."/>
            <person name="Reed J."/>
            <person name="Reid J.F."/>
            <person name="Ring B.Z."/>
            <person name="Ringwald M."/>
            <person name="Rost B."/>
            <person name="Ruan Y."/>
            <person name="Salzberg S.L."/>
            <person name="Sandelin A."/>
            <person name="Schneider C."/>
            <person name="Schoenbach C."/>
            <person name="Sekiguchi K."/>
            <person name="Semple C.A."/>
            <person name="Seno S."/>
            <person name="Sessa L."/>
            <person name="Sheng Y."/>
            <person name="Shibata Y."/>
            <person name="Shimada H."/>
            <person name="Shimada K."/>
            <person name="Silva D."/>
            <person name="Sinclair B."/>
            <person name="Sperling S."/>
            <person name="Stupka E."/>
            <person name="Sugiura K."/>
            <person name="Sultana R."/>
            <person name="Takenaka Y."/>
            <person name="Taki K."/>
            <person name="Tammoja K."/>
            <person name="Tan S.L."/>
            <person name="Tang S."/>
            <person name="Taylor M.S."/>
            <person name="Tegner J."/>
            <person name="Teichmann S.A."/>
            <person name="Ueda H.R."/>
            <person name="van Nimwegen E."/>
            <person name="Verardo R."/>
            <person name="Wei C.L."/>
            <person name="Yagi K."/>
            <person name="Yamanishi H."/>
            <person name="Zabarovsky E."/>
            <person name="Zhu S."/>
            <person name="Zimmer A."/>
            <person name="Hide W."/>
            <person name="Bult C."/>
            <person name="Grimmond S.M."/>
            <person name="Teasdale R.D."/>
            <person name="Liu E.T."/>
            <person name="Brusic V."/>
            <person name="Quackenbush J."/>
            <person name="Wahlestedt C."/>
            <person name="Mattick J.S."/>
            <person name="Hume D.A."/>
            <person name="Kai C."/>
            <person name="Sasaki D."/>
            <person name="Tomaru Y."/>
            <person name="Fukuda S."/>
            <person name="Kanamori-Katayama M."/>
            <person name="Suzuki M."/>
            <person name="Aoki J."/>
            <person name="Arakawa T."/>
            <person name="Iida J."/>
            <person name="Imamura K."/>
            <person name="Itoh M."/>
            <person name="Kato T."/>
            <person name="Kawaji H."/>
            <person name="Kawagashira N."/>
            <person name="Kawashima T."/>
            <person name="Kojima M."/>
            <person name="Kondo S."/>
            <person name="Konno H."/>
            <person name="Nakano K."/>
            <person name="Ninomiya N."/>
            <person name="Nishio T."/>
            <person name="Okada M."/>
            <person name="Plessy C."/>
            <person name="Shibata K."/>
            <person name="Shiraki T."/>
            <person name="Suzuki S."/>
            <person name="Tagami M."/>
            <person name="Waki K."/>
            <person name="Watahiki A."/>
            <person name="Okamura-Oho Y."/>
            <person name="Suzuki H."/>
            <person name="Kawai J."/>
            <person name="Hayashizaki Y."/>
        </authorList>
    </citation>
    <scope>NUCLEOTIDE SEQUENCE [LARGE SCALE MRNA]</scope>
    <source>
        <strain>C57BL/6J</strain>
        <tissue>Oviduct</tissue>
        <tissue>Urinary bladder</tissue>
    </source>
</reference>
<reference key="2">
    <citation type="journal article" date="2004" name="Genome Res.">
        <title>The status, quality, and expansion of the NIH full-length cDNA project: the Mammalian Gene Collection (MGC).</title>
        <authorList>
            <consortium name="The MGC Project Team"/>
        </authorList>
    </citation>
    <scope>NUCLEOTIDE SEQUENCE [LARGE SCALE MRNA]</scope>
    <source>
        <tissue>Brain</tissue>
    </source>
</reference>
<name>SBSPO_MOUSE</name>
<accession>Q3UPR9</accession>
<accession>B2RVH7</accession>
<dbReference type="EMBL" id="AK137144">
    <property type="protein sequence ID" value="BAE23250.1"/>
    <property type="molecule type" value="mRNA"/>
</dbReference>
<dbReference type="EMBL" id="AK143251">
    <property type="protein sequence ID" value="BAE25326.1"/>
    <property type="molecule type" value="mRNA"/>
</dbReference>
<dbReference type="EMBL" id="BC147194">
    <property type="protein sequence ID" value="AAI47195.1"/>
    <property type="molecule type" value="mRNA"/>
</dbReference>
<dbReference type="EMBL" id="BC147195">
    <property type="protein sequence ID" value="AAI47196.1"/>
    <property type="molecule type" value="mRNA"/>
</dbReference>
<dbReference type="CCDS" id="CCDS14828.1"/>
<dbReference type="RefSeq" id="NP_001028460.1">
    <property type="nucleotide sequence ID" value="NM_001033288.3"/>
</dbReference>
<dbReference type="FunCoup" id="Q3UPR9">
    <property type="interactions" value="8"/>
</dbReference>
<dbReference type="STRING" id="10090.ENSMUSP00000047730"/>
<dbReference type="GlyCosmos" id="Q3UPR9">
    <property type="glycosylation" value="1 site, No reported glycans"/>
</dbReference>
<dbReference type="GlyGen" id="Q3UPR9">
    <property type="glycosylation" value="1 site, 1 N-linked glycan (1 site)"/>
</dbReference>
<dbReference type="PhosphoSitePlus" id="Q3UPR9"/>
<dbReference type="jPOST" id="Q3UPR9"/>
<dbReference type="PaxDb" id="10090-ENSMUSP00000047730"/>
<dbReference type="ProteomicsDB" id="256600"/>
<dbReference type="Antibodypedia" id="25155">
    <property type="antibodies" value="64 antibodies from 17 providers"/>
</dbReference>
<dbReference type="DNASU" id="226866"/>
<dbReference type="Ensembl" id="ENSMUST00000040695.5">
    <property type="protein sequence ID" value="ENSMUSP00000047730.5"/>
    <property type="gene ID" value="ENSMUSG00000032719.5"/>
</dbReference>
<dbReference type="GeneID" id="226866"/>
<dbReference type="KEGG" id="mmu:226866"/>
<dbReference type="UCSC" id="uc007ajj.1">
    <property type="organism name" value="mouse"/>
</dbReference>
<dbReference type="AGR" id="MGI:2684952"/>
<dbReference type="CTD" id="157869"/>
<dbReference type="MGI" id="MGI:2684952">
    <property type="gene designation" value="Sbspon"/>
</dbReference>
<dbReference type="VEuPathDB" id="HostDB:ENSMUSG00000032719"/>
<dbReference type="eggNOG" id="ENOG502QV8I">
    <property type="taxonomic scope" value="Eukaryota"/>
</dbReference>
<dbReference type="GeneTree" id="ENSGT00390000008325"/>
<dbReference type="HOGENOM" id="CLU_058116_1_1_1"/>
<dbReference type="InParanoid" id="Q3UPR9"/>
<dbReference type="OMA" id="QAASPQW"/>
<dbReference type="OrthoDB" id="98591at2759"/>
<dbReference type="PhylomeDB" id="Q3UPR9"/>
<dbReference type="TreeFam" id="TF315634"/>
<dbReference type="Reactome" id="R-MMU-5173214">
    <property type="pathway name" value="O-glycosylation of TSR domain-containing proteins"/>
</dbReference>
<dbReference type="BioGRID-ORCS" id="226866">
    <property type="hits" value="3 hits in 76 CRISPR screens"/>
</dbReference>
<dbReference type="ChiTaRS" id="Sbspon">
    <property type="organism name" value="mouse"/>
</dbReference>
<dbReference type="PRO" id="PR:Q3UPR9"/>
<dbReference type="Proteomes" id="UP000000589">
    <property type="component" value="Chromosome 1"/>
</dbReference>
<dbReference type="RNAct" id="Q3UPR9">
    <property type="molecule type" value="protein"/>
</dbReference>
<dbReference type="Bgee" id="ENSMUSG00000032719">
    <property type="expression patterns" value="Expressed in sciatic nerve and 108 other cell types or tissues"/>
</dbReference>
<dbReference type="GO" id="GO:0005576">
    <property type="term" value="C:extracellular region"/>
    <property type="evidence" value="ECO:0007669"/>
    <property type="project" value="UniProtKB-KW"/>
</dbReference>
<dbReference type="FunFam" id="2.20.100.10:FF:000019">
    <property type="entry name" value="Thrombospondin type 1 domain containing 7A"/>
    <property type="match status" value="1"/>
</dbReference>
<dbReference type="Gene3D" id="2.20.100.10">
    <property type="entry name" value="Thrombospondin type-1 (TSP1) repeat"/>
    <property type="match status" value="1"/>
</dbReference>
<dbReference type="InterPro" id="IPR039942">
    <property type="entry name" value="SBSPO"/>
</dbReference>
<dbReference type="InterPro" id="IPR056801">
    <property type="entry name" value="SBSPON_C"/>
</dbReference>
<dbReference type="InterPro" id="IPR036024">
    <property type="entry name" value="Somatomedin_B-like_dom_sf"/>
</dbReference>
<dbReference type="InterPro" id="IPR001212">
    <property type="entry name" value="Somatomedin_B_dom"/>
</dbReference>
<dbReference type="InterPro" id="IPR000884">
    <property type="entry name" value="TSP1_rpt"/>
</dbReference>
<dbReference type="InterPro" id="IPR036383">
    <property type="entry name" value="TSP1_rpt_sf"/>
</dbReference>
<dbReference type="InterPro" id="IPR044004">
    <property type="entry name" value="TSP1_spondin_dom"/>
</dbReference>
<dbReference type="PANTHER" id="PTHR20920">
    <property type="entry name" value="RPE-SPONDIN"/>
    <property type="match status" value="1"/>
</dbReference>
<dbReference type="PANTHER" id="PTHR20920:SF2">
    <property type="entry name" value="SOMATOMEDIN-B AND THROMBOSPONDIN TYPE-1 DOMAIN-CONTAINING PROTEIN"/>
    <property type="match status" value="1"/>
</dbReference>
<dbReference type="Pfam" id="PF25031">
    <property type="entry name" value="SBSPON_C"/>
    <property type="match status" value="1"/>
</dbReference>
<dbReference type="Pfam" id="PF19028">
    <property type="entry name" value="TSP1_spondin"/>
    <property type="match status" value="1"/>
</dbReference>
<dbReference type="SUPFAM" id="SSF90188">
    <property type="entry name" value="Somatomedin B domain"/>
    <property type="match status" value="1"/>
</dbReference>
<dbReference type="SUPFAM" id="SSF82895">
    <property type="entry name" value="TSP-1 type 1 repeat"/>
    <property type="match status" value="1"/>
</dbReference>
<dbReference type="PROSITE" id="PS00524">
    <property type="entry name" value="SMB_1"/>
    <property type="match status" value="1"/>
</dbReference>
<dbReference type="PROSITE" id="PS50958">
    <property type="entry name" value="SMB_2"/>
    <property type="match status" value="1"/>
</dbReference>
<dbReference type="PROSITE" id="PS50092">
    <property type="entry name" value="TSP1"/>
    <property type="match status" value="1"/>
</dbReference>
<protein>
    <recommendedName>
        <fullName>Somatomedin-B and thrombospondin type-1 domain-containing protein</fullName>
    </recommendedName>
    <alternativeName>
        <fullName>RPE-spondin</fullName>
    </alternativeName>
</protein>
<feature type="signal peptide" evidence="2">
    <location>
        <begin position="1"/>
        <end position="20"/>
    </location>
</feature>
<feature type="chain" id="PRO_0000332159" description="Somatomedin-B and thrombospondin type-1 domain-containing protein">
    <location>
        <begin position="21"/>
        <end position="264"/>
    </location>
</feature>
<feature type="domain" description="SMB" evidence="4">
    <location>
        <begin position="24"/>
        <end position="75"/>
    </location>
</feature>
<feature type="domain" description="TSP type-1" evidence="3">
    <location>
        <begin position="74"/>
        <end position="125"/>
    </location>
</feature>
<feature type="glycosylation site" description="N-linked (GlcNAc...) asparagine" evidence="2">
    <location>
        <position position="227"/>
    </location>
</feature>
<feature type="disulfide bond" description="Alternate" evidence="4">
    <location>
        <begin position="28"/>
        <end position="52"/>
    </location>
</feature>
<feature type="disulfide bond" description="Alternate" evidence="4">
    <location>
        <begin position="28"/>
        <end position="36"/>
    </location>
</feature>
<feature type="disulfide bond" description="Alternate" evidence="4">
    <location>
        <begin position="36"/>
        <end position="70"/>
    </location>
</feature>
<feature type="disulfide bond" description="Alternate" evidence="4">
    <location>
        <begin position="50"/>
        <end position="63"/>
    </location>
</feature>
<feature type="disulfide bond" description="Alternate" evidence="4">
    <location>
        <begin position="50"/>
        <end position="52"/>
    </location>
</feature>
<feature type="disulfide bond" evidence="1">
    <location>
        <begin position="56"/>
        <end position="62"/>
    </location>
</feature>
<feature type="disulfide bond" description="Alternate" evidence="4">
    <location>
        <begin position="63"/>
        <end position="70"/>
    </location>
</feature>
<proteinExistence type="evidence at transcript level"/>
<organism>
    <name type="scientific">Mus musculus</name>
    <name type="common">Mouse</name>
    <dbReference type="NCBI Taxonomy" id="10090"/>
    <lineage>
        <taxon>Eukaryota</taxon>
        <taxon>Metazoa</taxon>
        <taxon>Chordata</taxon>
        <taxon>Craniata</taxon>
        <taxon>Vertebrata</taxon>
        <taxon>Euteleostomi</taxon>
        <taxon>Mammalia</taxon>
        <taxon>Eutheria</taxon>
        <taxon>Euarchontoglires</taxon>
        <taxon>Glires</taxon>
        <taxon>Rodentia</taxon>
        <taxon>Myomorpha</taxon>
        <taxon>Muroidea</taxon>
        <taxon>Muridae</taxon>
        <taxon>Murinae</taxon>
        <taxon>Mus</taxon>
        <taxon>Mus</taxon>
    </lineage>
</organism>
<comment type="subcellular location">
    <subcellularLocation>
        <location evidence="1">Secreted</location>
        <location evidence="1">Extracellular space</location>
        <location evidence="1">Extracellular matrix</location>
    </subcellularLocation>
</comment>
<comment type="similarity">
    <text evidence="5">Belongs to the thrombospondin family.</text>
</comment>
<sequence length="264" mass="29464">MKTLWMVLCALARLWPGALAGCAEAGRCCPGRDPACFARGWRLDRVYGTCFCDQACRLTGDCCFDYDRACPARPCFVGEWSPWSGCAGQCQPTTRVRRRSVRQEPLNGGAPCPPLEERAGCLEYSSSQSQDCGHSFVPAFITSSVFNKKRIIQAVSPQWSTHTKDAGYCMEFKTESLTPHCALVNSPLTRWMQYLREGYTVCVDCQPPAMNSVSLRCSGDGLDSDGNQTLRWQAIGNPRCQGTWKKVRRVEQCSCPDVHRFIFI</sequence>
<gene>
    <name type="primary">Sbspon</name>
    <name type="synonym">Gm106</name>
    <name type="synonym">Rpesp</name>
</gene>